<name>Y1755_ARATH</name>
<proteinExistence type="evidence at protein level"/>
<reference key="1">
    <citation type="journal article" date="2000" name="Nature">
        <title>Sequence and analysis of chromosome 1 of the plant Arabidopsis thaliana.</title>
        <authorList>
            <person name="Theologis A."/>
            <person name="Ecker J.R."/>
            <person name="Palm C.J."/>
            <person name="Federspiel N.A."/>
            <person name="Kaul S."/>
            <person name="White O."/>
            <person name="Alonso J."/>
            <person name="Altafi H."/>
            <person name="Araujo R."/>
            <person name="Bowman C.L."/>
            <person name="Brooks S.Y."/>
            <person name="Buehler E."/>
            <person name="Chan A."/>
            <person name="Chao Q."/>
            <person name="Chen H."/>
            <person name="Cheuk R.F."/>
            <person name="Chin C.W."/>
            <person name="Chung M.K."/>
            <person name="Conn L."/>
            <person name="Conway A.B."/>
            <person name="Conway A.R."/>
            <person name="Creasy T.H."/>
            <person name="Dewar K."/>
            <person name="Dunn P."/>
            <person name="Etgu P."/>
            <person name="Feldblyum T.V."/>
            <person name="Feng J.-D."/>
            <person name="Fong B."/>
            <person name="Fujii C.Y."/>
            <person name="Gill J.E."/>
            <person name="Goldsmith A.D."/>
            <person name="Haas B."/>
            <person name="Hansen N.F."/>
            <person name="Hughes B."/>
            <person name="Huizar L."/>
            <person name="Hunter J.L."/>
            <person name="Jenkins J."/>
            <person name="Johnson-Hopson C."/>
            <person name="Khan S."/>
            <person name="Khaykin E."/>
            <person name="Kim C.J."/>
            <person name="Koo H.L."/>
            <person name="Kremenetskaia I."/>
            <person name="Kurtz D.B."/>
            <person name="Kwan A."/>
            <person name="Lam B."/>
            <person name="Langin-Hooper S."/>
            <person name="Lee A."/>
            <person name="Lee J.M."/>
            <person name="Lenz C.A."/>
            <person name="Li J.H."/>
            <person name="Li Y.-P."/>
            <person name="Lin X."/>
            <person name="Liu S.X."/>
            <person name="Liu Z.A."/>
            <person name="Luros J.S."/>
            <person name="Maiti R."/>
            <person name="Marziali A."/>
            <person name="Militscher J."/>
            <person name="Miranda M."/>
            <person name="Nguyen M."/>
            <person name="Nierman W.C."/>
            <person name="Osborne B.I."/>
            <person name="Pai G."/>
            <person name="Peterson J."/>
            <person name="Pham P.K."/>
            <person name="Rizzo M."/>
            <person name="Rooney T."/>
            <person name="Rowley D."/>
            <person name="Sakano H."/>
            <person name="Salzberg S.L."/>
            <person name="Schwartz J.R."/>
            <person name="Shinn P."/>
            <person name="Southwick A.M."/>
            <person name="Sun H."/>
            <person name="Tallon L.J."/>
            <person name="Tambunga G."/>
            <person name="Toriumi M.J."/>
            <person name="Town C.D."/>
            <person name="Utterback T."/>
            <person name="Van Aken S."/>
            <person name="Vaysberg M."/>
            <person name="Vysotskaia V.S."/>
            <person name="Walker M."/>
            <person name="Wu D."/>
            <person name="Yu G."/>
            <person name="Fraser C.M."/>
            <person name="Venter J.C."/>
            <person name="Davis R.W."/>
        </authorList>
    </citation>
    <scope>NUCLEOTIDE SEQUENCE [LARGE SCALE GENOMIC DNA]</scope>
    <source>
        <strain>cv. Columbia</strain>
    </source>
</reference>
<reference key="2">
    <citation type="journal article" date="2017" name="Plant J.">
        <title>Araport11: a complete reannotation of the Arabidopsis thaliana reference genome.</title>
        <authorList>
            <person name="Cheng C.Y."/>
            <person name="Krishnakumar V."/>
            <person name="Chan A.P."/>
            <person name="Thibaud-Nissen F."/>
            <person name="Schobel S."/>
            <person name="Town C.D."/>
        </authorList>
    </citation>
    <scope>GENOME REANNOTATION</scope>
    <source>
        <strain>cv. Columbia</strain>
    </source>
</reference>
<reference key="3">
    <citation type="journal article" date="2010" name="BMC Genomics">
        <title>Genome-wide cloning and sequence analysis of leucine-rich repeat receptor-like protein kinase genes in Arabidopsis thaliana.</title>
        <authorList>
            <person name="Gou X."/>
            <person name="He K."/>
            <person name="Yang H."/>
            <person name="Yuan T."/>
            <person name="Lin H."/>
            <person name="Clouse S.D."/>
            <person name="Li J."/>
        </authorList>
    </citation>
    <scope>NUCLEOTIDE SEQUENCE [LARGE SCALE MRNA]</scope>
    <source>
        <strain>cv. Columbia</strain>
    </source>
</reference>
<gene>
    <name type="ordered locus">At1g07550</name>
    <name type="ORF">F22G5.7</name>
</gene>
<comment type="catalytic activity">
    <reaction>
        <text>L-seryl-[protein] + ATP = O-phospho-L-seryl-[protein] + ADP + H(+)</text>
        <dbReference type="Rhea" id="RHEA:17989"/>
        <dbReference type="Rhea" id="RHEA-COMP:9863"/>
        <dbReference type="Rhea" id="RHEA-COMP:11604"/>
        <dbReference type="ChEBI" id="CHEBI:15378"/>
        <dbReference type="ChEBI" id="CHEBI:29999"/>
        <dbReference type="ChEBI" id="CHEBI:30616"/>
        <dbReference type="ChEBI" id="CHEBI:83421"/>
        <dbReference type="ChEBI" id="CHEBI:456216"/>
        <dbReference type="EC" id="2.7.11.1"/>
    </reaction>
</comment>
<comment type="catalytic activity">
    <reaction>
        <text>L-threonyl-[protein] + ATP = O-phospho-L-threonyl-[protein] + ADP + H(+)</text>
        <dbReference type="Rhea" id="RHEA:46608"/>
        <dbReference type="Rhea" id="RHEA-COMP:11060"/>
        <dbReference type="Rhea" id="RHEA-COMP:11605"/>
        <dbReference type="ChEBI" id="CHEBI:15378"/>
        <dbReference type="ChEBI" id="CHEBI:30013"/>
        <dbReference type="ChEBI" id="CHEBI:30616"/>
        <dbReference type="ChEBI" id="CHEBI:61977"/>
        <dbReference type="ChEBI" id="CHEBI:456216"/>
        <dbReference type="EC" id="2.7.11.1"/>
    </reaction>
</comment>
<comment type="interaction">
    <interactant intactId="EBI-16907406">
        <id>C0LGD8</id>
    </interactant>
    <interactant intactId="EBI-1238200">
        <id>Q9LZV7</id>
        <label>PXC2</label>
    </interactant>
    <organismsDiffer>false</organismsDiffer>
    <experiments>2</experiments>
</comment>
<comment type="subcellular location">
    <subcellularLocation>
        <location evidence="5">Membrane</location>
        <topology evidence="5">Single-pass type I membrane protein</topology>
    </subcellularLocation>
</comment>
<comment type="similarity">
    <text evidence="3">Belongs to the protein kinase superfamily. Ser/Thr protein kinase family.</text>
</comment>
<comment type="sequence caution" evidence="5">
    <conflict type="erroneous gene model prediction">
        <sequence resource="EMBL-CDS" id="AAF79546"/>
    </conflict>
</comment>
<feature type="signal peptide" evidence="2">
    <location>
        <begin position="1"/>
        <end position="23"/>
    </location>
</feature>
<feature type="chain" id="PRO_0000387543" description="Probable LRR receptor-like serine/threonine-protein kinase At1g07550">
    <location>
        <begin position="24"/>
        <end position="864"/>
    </location>
</feature>
<feature type="topological domain" description="Extracellular" evidence="2">
    <location>
        <begin position="24"/>
        <end position="507"/>
    </location>
</feature>
<feature type="transmembrane region" description="Helical" evidence="2">
    <location>
        <begin position="508"/>
        <end position="528"/>
    </location>
</feature>
<feature type="topological domain" description="Cytoplasmic" evidence="2">
    <location>
        <begin position="529"/>
        <end position="864"/>
    </location>
</feature>
<feature type="repeat" description="LRR 1">
    <location>
        <begin position="411"/>
        <end position="434"/>
    </location>
</feature>
<feature type="repeat" description="LRR 2">
    <location>
        <begin position="435"/>
        <end position="457"/>
    </location>
</feature>
<feature type="repeat" description="LRR 3">
    <location>
        <begin position="459"/>
        <end position="480"/>
    </location>
</feature>
<feature type="domain" description="Protein kinase" evidence="3">
    <location>
        <begin position="560"/>
        <end position="831"/>
    </location>
</feature>
<feature type="active site" description="Proton acceptor" evidence="3 4">
    <location>
        <position position="684"/>
    </location>
</feature>
<feature type="binding site" evidence="3">
    <location>
        <begin position="566"/>
        <end position="574"/>
    </location>
    <ligand>
        <name>ATP</name>
        <dbReference type="ChEBI" id="CHEBI:30616"/>
    </ligand>
</feature>
<feature type="binding site" evidence="3">
    <location>
        <position position="587"/>
    </location>
    <ligand>
        <name>ATP</name>
        <dbReference type="ChEBI" id="CHEBI:30616"/>
    </ligand>
</feature>
<feature type="modified residue" description="Phosphothreonine" evidence="1">
    <location>
        <position position="551"/>
    </location>
</feature>
<feature type="modified residue" description="Phosphotyrosine" evidence="1">
    <location>
        <position position="632"/>
    </location>
</feature>
<feature type="modified residue" description="Phosphothreonine" evidence="1">
    <location>
        <position position="718"/>
    </location>
</feature>
<feature type="modified residue" description="Phosphothreonine" evidence="1">
    <location>
        <position position="723"/>
    </location>
</feature>
<feature type="modified residue" description="Phosphotyrosine" evidence="1">
    <location>
        <position position="731"/>
    </location>
</feature>
<feature type="glycosylation site" description="N-linked (GlcNAc...) asparagine" evidence="2">
    <location>
        <position position="49"/>
    </location>
</feature>
<feature type="glycosylation site" description="N-linked (GlcNAc...) asparagine" evidence="2">
    <location>
        <position position="229"/>
    </location>
</feature>
<feature type="glycosylation site" description="N-linked (GlcNAc...) asparagine" evidence="2">
    <location>
        <position position="256"/>
    </location>
</feature>
<feature type="glycosylation site" description="N-linked (GlcNAc...) asparagine" evidence="2">
    <location>
        <position position="289"/>
    </location>
</feature>
<feature type="glycosylation site" description="N-linked (GlcNAc...) asparagine" evidence="2">
    <location>
        <position position="432"/>
    </location>
</feature>
<feature type="glycosylation site" description="N-linked (GlcNAc...) asparagine" evidence="2">
    <location>
        <position position="445"/>
    </location>
</feature>
<feature type="glycosylation site" description="N-linked (GlcNAc...) asparagine" evidence="2">
    <location>
        <position position="464"/>
    </location>
</feature>
<organism>
    <name type="scientific">Arabidopsis thaliana</name>
    <name type="common">Mouse-ear cress</name>
    <dbReference type="NCBI Taxonomy" id="3702"/>
    <lineage>
        <taxon>Eukaryota</taxon>
        <taxon>Viridiplantae</taxon>
        <taxon>Streptophyta</taxon>
        <taxon>Embryophyta</taxon>
        <taxon>Tracheophyta</taxon>
        <taxon>Spermatophyta</taxon>
        <taxon>Magnoliopsida</taxon>
        <taxon>eudicotyledons</taxon>
        <taxon>Gunneridae</taxon>
        <taxon>Pentapetalae</taxon>
        <taxon>rosids</taxon>
        <taxon>malvids</taxon>
        <taxon>Brassicales</taxon>
        <taxon>Brassicaceae</taxon>
        <taxon>Camelineae</taxon>
        <taxon>Arabidopsis</taxon>
    </lineage>
</organism>
<dbReference type="EC" id="2.7.11.1"/>
<dbReference type="EMBL" id="AC022464">
    <property type="protein sequence ID" value="AAF79546.1"/>
    <property type="status" value="ALT_SEQ"/>
    <property type="molecule type" value="Genomic_DNA"/>
</dbReference>
<dbReference type="EMBL" id="CP002684">
    <property type="protein sequence ID" value="AEE28141.1"/>
    <property type="molecule type" value="Genomic_DNA"/>
</dbReference>
<dbReference type="EMBL" id="FJ708627">
    <property type="protein sequence ID" value="ACN59223.1"/>
    <property type="molecule type" value="mRNA"/>
</dbReference>
<dbReference type="RefSeq" id="NP_172235.2">
    <property type="nucleotide sequence ID" value="NM_100629.4"/>
</dbReference>
<dbReference type="SMR" id="C0LGD8"/>
<dbReference type="BioGRID" id="22510">
    <property type="interactions" value="41"/>
</dbReference>
<dbReference type="IntAct" id="C0LGD8">
    <property type="interactions" value="41"/>
</dbReference>
<dbReference type="STRING" id="3702.C0LGD8"/>
<dbReference type="GlyGen" id="C0LGD8">
    <property type="glycosylation" value="7 sites"/>
</dbReference>
<dbReference type="iPTMnet" id="C0LGD8"/>
<dbReference type="MetOSite" id="C0LGD8"/>
<dbReference type="PaxDb" id="3702-AT1G07550.1"/>
<dbReference type="ProteomicsDB" id="243055"/>
<dbReference type="EnsemblPlants" id="AT1G07550.1">
    <property type="protein sequence ID" value="AT1G07550.1"/>
    <property type="gene ID" value="AT1G07550"/>
</dbReference>
<dbReference type="GeneID" id="837269"/>
<dbReference type="Gramene" id="AT1G07550.1">
    <property type="protein sequence ID" value="AT1G07550.1"/>
    <property type="gene ID" value="AT1G07550"/>
</dbReference>
<dbReference type="KEGG" id="ath:AT1G07550"/>
<dbReference type="Araport" id="AT1G07550"/>
<dbReference type="TAIR" id="AT1G07550"/>
<dbReference type="eggNOG" id="ENOG502QQCZ">
    <property type="taxonomic scope" value="Eukaryota"/>
</dbReference>
<dbReference type="HOGENOM" id="CLU_000288_41_1_1"/>
<dbReference type="InParanoid" id="C0LGD8"/>
<dbReference type="OMA" id="THINTSH"/>
<dbReference type="PhylomeDB" id="C0LGD8"/>
<dbReference type="PRO" id="PR:C0LGD8"/>
<dbReference type="Proteomes" id="UP000006548">
    <property type="component" value="Chromosome 1"/>
</dbReference>
<dbReference type="ExpressionAtlas" id="C0LGD8">
    <property type="expression patterns" value="baseline and differential"/>
</dbReference>
<dbReference type="GO" id="GO:0016020">
    <property type="term" value="C:membrane"/>
    <property type="evidence" value="ECO:0007669"/>
    <property type="project" value="UniProtKB-SubCell"/>
</dbReference>
<dbReference type="GO" id="GO:0005524">
    <property type="term" value="F:ATP binding"/>
    <property type="evidence" value="ECO:0007669"/>
    <property type="project" value="UniProtKB-KW"/>
</dbReference>
<dbReference type="GO" id="GO:0106310">
    <property type="term" value="F:protein serine kinase activity"/>
    <property type="evidence" value="ECO:0007669"/>
    <property type="project" value="RHEA"/>
</dbReference>
<dbReference type="GO" id="GO:0004674">
    <property type="term" value="F:protein serine/threonine kinase activity"/>
    <property type="evidence" value="ECO:0007669"/>
    <property type="project" value="UniProtKB-KW"/>
</dbReference>
<dbReference type="CDD" id="cd14066">
    <property type="entry name" value="STKc_IRAK"/>
    <property type="match status" value="1"/>
</dbReference>
<dbReference type="FunFam" id="3.80.10.10:FF:000129">
    <property type="entry name" value="Leucine-rich repeat receptor-like kinase"/>
    <property type="match status" value="1"/>
</dbReference>
<dbReference type="FunFam" id="3.30.200.20:FF:000394">
    <property type="entry name" value="Leucine-rich repeat receptor-like protein kinase"/>
    <property type="match status" value="1"/>
</dbReference>
<dbReference type="FunFam" id="1.10.510.10:FF:000146">
    <property type="entry name" value="LRR receptor-like serine/threonine-protein kinase IOS1"/>
    <property type="match status" value="1"/>
</dbReference>
<dbReference type="Gene3D" id="3.30.200.20">
    <property type="entry name" value="Phosphorylase Kinase, domain 1"/>
    <property type="match status" value="1"/>
</dbReference>
<dbReference type="Gene3D" id="3.80.10.10">
    <property type="entry name" value="Ribonuclease Inhibitor"/>
    <property type="match status" value="1"/>
</dbReference>
<dbReference type="Gene3D" id="1.10.510.10">
    <property type="entry name" value="Transferase(Phosphotransferase) domain 1"/>
    <property type="match status" value="1"/>
</dbReference>
<dbReference type="InterPro" id="IPR011009">
    <property type="entry name" value="Kinase-like_dom_sf"/>
</dbReference>
<dbReference type="InterPro" id="IPR001611">
    <property type="entry name" value="Leu-rich_rpt"/>
</dbReference>
<dbReference type="InterPro" id="IPR032675">
    <property type="entry name" value="LRR_dom_sf"/>
</dbReference>
<dbReference type="InterPro" id="IPR024788">
    <property type="entry name" value="Malectin-like_Carb-bd_dom"/>
</dbReference>
<dbReference type="InterPro" id="IPR000719">
    <property type="entry name" value="Prot_kinase_dom"/>
</dbReference>
<dbReference type="InterPro" id="IPR017441">
    <property type="entry name" value="Protein_kinase_ATP_BS"/>
</dbReference>
<dbReference type="InterPro" id="IPR008271">
    <property type="entry name" value="Ser/Thr_kinase_AS"/>
</dbReference>
<dbReference type="PANTHER" id="PTHR45631:SF151">
    <property type="entry name" value="MALECTIN-LIKE DOMAIN-CONTAINING PROTEIN"/>
    <property type="match status" value="1"/>
</dbReference>
<dbReference type="PANTHER" id="PTHR45631">
    <property type="entry name" value="OS07G0107800 PROTEIN-RELATED"/>
    <property type="match status" value="1"/>
</dbReference>
<dbReference type="Pfam" id="PF13855">
    <property type="entry name" value="LRR_8"/>
    <property type="match status" value="1"/>
</dbReference>
<dbReference type="Pfam" id="PF12819">
    <property type="entry name" value="Malectin_like"/>
    <property type="match status" value="1"/>
</dbReference>
<dbReference type="Pfam" id="PF00069">
    <property type="entry name" value="Pkinase"/>
    <property type="match status" value="1"/>
</dbReference>
<dbReference type="SMART" id="SM00220">
    <property type="entry name" value="S_TKc"/>
    <property type="match status" value="1"/>
</dbReference>
<dbReference type="SUPFAM" id="SSF52058">
    <property type="entry name" value="L domain-like"/>
    <property type="match status" value="1"/>
</dbReference>
<dbReference type="SUPFAM" id="SSF56112">
    <property type="entry name" value="Protein kinase-like (PK-like)"/>
    <property type="match status" value="1"/>
</dbReference>
<dbReference type="PROSITE" id="PS00107">
    <property type="entry name" value="PROTEIN_KINASE_ATP"/>
    <property type="match status" value="1"/>
</dbReference>
<dbReference type="PROSITE" id="PS50011">
    <property type="entry name" value="PROTEIN_KINASE_DOM"/>
    <property type="match status" value="1"/>
</dbReference>
<dbReference type="PROSITE" id="PS00108">
    <property type="entry name" value="PROTEIN_KINASE_ST"/>
    <property type="match status" value="1"/>
</dbReference>
<keyword id="KW-0067">ATP-binding</keyword>
<keyword id="KW-0325">Glycoprotein</keyword>
<keyword id="KW-0418">Kinase</keyword>
<keyword id="KW-0433">Leucine-rich repeat</keyword>
<keyword id="KW-0472">Membrane</keyword>
<keyword id="KW-0547">Nucleotide-binding</keyword>
<keyword id="KW-0597">Phosphoprotein</keyword>
<keyword id="KW-0675">Receptor</keyword>
<keyword id="KW-1185">Reference proteome</keyword>
<keyword id="KW-0677">Repeat</keyword>
<keyword id="KW-0723">Serine/threonine-protein kinase</keyword>
<keyword id="KW-0732">Signal</keyword>
<keyword id="KW-0808">Transferase</keyword>
<keyword id="KW-0812">Transmembrane</keyword>
<keyword id="KW-1133">Transmembrane helix</keyword>
<evidence type="ECO:0000250" key="1">
    <source>
        <dbReference type="UniProtKB" id="O48814"/>
    </source>
</evidence>
<evidence type="ECO:0000255" key="2"/>
<evidence type="ECO:0000255" key="3">
    <source>
        <dbReference type="PROSITE-ProRule" id="PRU00159"/>
    </source>
</evidence>
<evidence type="ECO:0000255" key="4">
    <source>
        <dbReference type="PROSITE-ProRule" id="PRU10027"/>
    </source>
</evidence>
<evidence type="ECO:0000305" key="5"/>
<sequence>MDTCTRLLFAACATLSILHLVQSQNQQGFISLDCGLASNESPYNEANSNLTYISDADFIQGGKTGNVQKDLLMKLRKPYTVLRYFPDGIRNCYSLNVKQDTNYLIRVMFRYGNYDGLNNSPRFDLYLGPNIWTTIDMGKSGDGVLEEIIHITRSNILDICLVKTGTSTPMISSIELRPLLYDTYIAQTGSLRNYNRFYFTDSNNYIRYPQDVHDRIWVPLILPEWTHINTSHHVIDSIDGYDPPQDVLRTGAMPANASDPMTITWNLKTATDQVYGYIYIAEIMEVQANETREFEVVVNNKVHFDPFRPTRFEAQVMFNNVPLTCEGGFCRLQLIKTPKSTLPPLMNAFEIFTGIEFPQSETNQNDVIAVKNIQASYGLNRISWQGDPCVPKQFLWTGLSCNVIDVSTPPRIVKLDLSSSGLNGVIPPSIQNLTQLQELDLSQNNLTGKVPEFLAKMKYLLVINLSGNKLSGLVPQALLDRKKEGLKLLVDENMICVSCGTRFPTAAVAASVSAVAIIILVLVLIFVLRRRKPSAGKVTRSSFKSENRRFTYSDVNKMTNNFQVVIGKGGFGVVYQGCLNNEQAAIKVLSHSSAQGYKEFKTEVELLLRVHHEKLVSLIGYCDDDNGLALIYELMGKGNLKEHLSGKPGCSVLSWPIRLKIALESAIGIEYLHTGCKPKIVHRDVKSTNILLSEEFEAKIADFGLSRSFLIGNEAQPTVVAGTFGYLDPEYHKTSLLSMKSDVYSFGVVLLEIISGQDVIDLSRENCNIVEWTSFILENGDIESIVDPNLHQDYDTSSAWKVVELAMSCVNRTSKERPNMSQVVHVLNECLETCEKWRKSQEVDLSSPLELSIVVDTEINPKAR</sequence>
<protein>
    <recommendedName>
        <fullName>Probable LRR receptor-like serine/threonine-protein kinase At1g07550</fullName>
        <ecNumber>2.7.11.1</ecNumber>
    </recommendedName>
</protein>
<accession>C0LGD8</accession>
<accession>Q9LNX8</accession>